<evidence type="ECO:0000250" key="1">
    <source>
        <dbReference type="UniProtKB" id="P09413"/>
    </source>
</evidence>
<evidence type="ECO:0000256" key="2">
    <source>
        <dbReference type="SAM" id="MobiDB-lite"/>
    </source>
</evidence>
<evidence type="ECO:0000269" key="3">
    <source>
    </source>
</evidence>
<evidence type="ECO:0000303" key="4">
    <source>
    </source>
</evidence>
<evidence type="ECO:0000305" key="5"/>
<evidence type="ECO:0000312" key="6">
    <source>
        <dbReference type="EMBL" id="CAD41966.1"/>
    </source>
</evidence>
<name>GVPC_PLAAG</name>
<keyword id="KW-0903">Direct protein sequencing</keyword>
<keyword id="KW-0304">Gas vesicle</keyword>
<keyword id="KW-0677">Repeat</keyword>
<reference evidence="6" key="1">
    <citation type="journal article" date="2002" name="FEMS Microbiol. Lett.">
        <title>Spontaneous mutations in gas vesicle genes of Planktothrix spp. affect gas vesicle production and critical pressure.</title>
        <authorList>
            <person name="Beard S.J."/>
            <person name="Handley B.A."/>
            <person name="Walsby A.E."/>
        </authorList>
    </citation>
    <scope>NUCLEOTIDE SEQUENCE [GENOMIC DNA]</scope>
    <source>
        <strain evidence="6">CYA 29</strain>
    </source>
</reference>
<reference key="2">
    <citation type="journal article" date="1992" name="J. Gen. Microbiol.">
        <title>The homologies of gas vesicle proteins.</title>
        <authorList>
            <person name="Griffiths A.E."/>
            <person name="Walsby A.E."/>
            <person name="Hayes P.K."/>
        </authorList>
    </citation>
    <scope>PROTEIN SEQUENCE OF 3-29</scope>
    <scope>SUBCELLULAR LOCATION</scope>
    <source>
        <strain>CYA 29</strain>
    </source>
</reference>
<dbReference type="EMBL" id="AJ494992">
    <property type="protein sequence ID" value="CAD41966.1"/>
    <property type="molecule type" value="Genomic_DNA"/>
</dbReference>
<dbReference type="RefSeq" id="WP_026794296.1">
    <property type="nucleotide sequence ID" value="NZ_LR882949.1"/>
</dbReference>
<dbReference type="SMR" id="P80999"/>
<dbReference type="GO" id="GO:0031411">
    <property type="term" value="C:gas vesicle"/>
    <property type="evidence" value="ECO:0007669"/>
    <property type="project" value="UniProtKB-SubCell"/>
</dbReference>
<dbReference type="GO" id="GO:0031412">
    <property type="term" value="P:gas vesicle organization"/>
    <property type="evidence" value="ECO:0007669"/>
    <property type="project" value="InterPro"/>
</dbReference>
<dbReference type="InterPro" id="IPR002003">
    <property type="entry name" value="Gas-vesicle_GvpC"/>
</dbReference>
<dbReference type="NCBIfam" id="TIGR02641">
    <property type="entry name" value="gvpC_cyan_rpt"/>
    <property type="match status" value="2"/>
</dbReference>
<proteinExistence type="evidence at protein level"/>
<comment type="function">
    <text evidence="1">Confers stability, involved in shaping gas vesicles, hollow, gas filled proteinaceous nanostructures. During planktonic growth they allow positioning of the organism at a favorable depth for light or nutrient acquisition.</text>
</comment>
<comment type="subcellular location">
    <subcellularLocation>
        <location evidence="3">Gas vesicle</location>
    </subcellularLocation>
    <text evidence="3">Binds to the external surface of the gas vesicle.</text>
</comment>
<comment type="similarity">
    <text evidence="5">Belongs to the gas vesicle GvpC family.</text>
</comment>
<organism>
    <name type="scientific">Planktothrix agardhii</name>
    <name type="common">Oscillatoria agardhii</name>
    <dbReference type="NCBI Taxonomy" id="1160"/>
    <lineage>
        <taxon>Bacteria</taxon>
        <taxon>Bacillati</taxon>
        <taxon>Cyanobacteriota</taxon>
        <taxon>Cyanophyceae</taxon>
        <taxon>Oscillatoriophycideae</taxon>
        <taxon>Oscillatoriales</taxon>
        <taxon>Microcoleaceae</taxon>
        <taxon>Planktothrix</taxon>
    </lineage>
</organism>
<feature type="initiator methionine" description="Removed" evidence="3">
    <location>
        <position position="1"/>
    </location>
</feature>
<feature type="chain" id="PRO_0000182667" description="Gas vesicle protein C">
    <location>
        <begin position="2"/>
        <end position="240"/>
    </location>
</feature>
<feature type="repeat" evidence="1">
    <location>
        <begin position="18"/>
        <end position="50"/>
    </location>
</feature>
<feature type="repeat" evidence="1">
    <location>
        <begin position="51"/>
        <end position="83"/>
    </location>
</feature>
<feature type="repeat" evidence="1">
    <location>
        <begin position="84"/>
        <end position="116"/>
    </location>
</feature>
<feature type="repeat" evidence="1">
    <location>
        <begin position="117"/>
        <end position="149"/>
    </location>
</feature>
<feature type="repeat" evidence="1">
    <location>
        <begin position="150"/>
        <end position="207"/>
    </location>
</feature>
<feature type="region of interest" description="Disordered" evidence="2">
    <location>
        <begin position="1"/>
        <end position="20"/>
    </location>
</feature>
<feature type="region of interest" description="5 X 33 AA tandem repeats" evidence="1">
    <location>
        <begin position="18"/>
        <end position="207"/>
    </location>
</feature>
<feature type="compositionally biased region" description="Basic and acidic residues" evidence="2">
    <location>
        <begin position="1"/>
        <end position="13"/>
    </location>
</feature>
<feature type="sequence conflict" description="In Ref. 2; AA sequence." evidence="5" ref="2">
    <original>W</original>
    <variation>N</variation>
    <location>
        <position position="7"/>
    </location>
</feature>
<feature type="sequence conflict" description="In Ref. 2; AA sequence." evidence="5" ref="2">
    <original>Q</original>
    <variation>L</variation>
    <location>
        <position position="9"/>
    </location>
</feature>
<feature type="sequence conflict" description="In Ref. 2; AA sequence." evidence="5" ref="2">
    <original>RQ</original>
    <variation>IV</variation>
    <location>
        <begin position="14"/>
        <end position="15"/>
    </location>
</feature>
<feature type="sequence conflict" description="In Ref. 2; AA sequence." evidence="5" ref="2">
    <original>QE</original>
    <variation>IL</variation>
    <location>
        <begin position="19"/>
        <end position="20"/>
    </location>
</feature>
<feature type="sequence conflict" description="In Ref. 2; AA sequence." evidence="5" ref="2">
    <original>QVQTT</original>
    <variation>IVITA</variation>
    <location>
        <begin position="24"/>
        <end position="28"/>
    </location>
</feature>
<gene>
    <name evidence="4" type="primary">gvpC</name>
</gene>
<accession>P80999</accession>
<accession>Q8GBY7</accession>
<sequence>MALKDKWQQDRIGRQQGVQERQQQVQTTLSLWQQERQNQALDDQESRQGFVTGVQQQTQELLTNISTERLWVAQQQREQLENFIQQLSQEVGEFLQQTIEERSQVAAQLHQQLSEFREDLEYRVTDLLANYQKQRLEARETLLEDLAIFRQTLYREVEEYLGELDILHQQMAAQLQQQLQQSRTERKDAVQKLFEDLGVFRAELQDYHLKLQQTVWGSSHRKPRKAITPQRSIPSRLYSC</sequence>
<protein>
    <recommendedName>
        <fullName evidence="4">Gas vesicle protein C</fullName>
        <shortName>GvpC</shortName>
    </recommendedName>
</protein>